<feature type="chain" id="PRO_0000286844" description="Ribonuclease J 2">
    <location>
        <begin position="1"/>
        <end position="557"/>
    </location>
</feature>
<feature type="binding site" evidence="2">
    <location>
        <position position="76"/>
    </location>
    <ligand>
        <name>Zn(2+)</name>
        <dbReference type="ChEBI" id="CHEBI:29105"/>
        <note>catalytic</note>
    </ligand>
</feature>
<feature type="binding site" evidence="2">
    <location>
        <position position="78"/>
    </location>
    <ligand>
        <name>Zn(2+)</name>
        <dbReference type="ChEBI" id="CHEBI:29105"/>
        <note>catalytic</note>
    </ligand>
</feature>
<feature type="binding site" evidence="2">
    <location>
        <position position="144"/>
    </location>
    <ligand>
        <name>Zn(2+)</name>
        <dbReference type="ChEBI" id="CHEBI:29105"/>
        <note>catalytic</note>
    </ligand>
</feature>
<feature type="binding site" evidence="2">
    <location>
        <position position="166"/>
    </location>
    <ligand>
        <name>Zn(2+)</name>
        <dbReference type="ChEBI" id="CHEBI:29105"/>
        <note>catalytic</note>
    </ligand>
</feature>
<feature type="binding site" evidence="2">
    <location>
        <begin position="366"/>
        <end position="370"/>
    </location>
    <ligand>
        <name>substrate</name>
    </ligand>
</feature>
<dbReference type="EC" id="3.1.-.-" evidence="2"/>
<dbReference type="EMBL" id="BA000018">
    <property type="protein sequence ID" value="BAB42370.1"/>
    <property type="molecule type" value="Genomic_DNA"/>
</dbReference>
<dbReference type="PIR" id="F89901">
    <property type="entry name" value="F89901"/>
</dbReference>
<dbReference type="SMR" id="Q7A5X6"/>
<dbReference type="EnsemblBacteria" id="BAB42370">
    <property type="protein sequence ID" value="BAB42370"/>
    <property type="gene ID" value="BAB42370"/>
</dbReference>
<dbReference type="KEGG" id="sau:SA1118"/>
<dbReference type="HOGENOM" id="CLU_008727_3_1_9"/>
<dbReference type="GO" id="GO:0005737">
    <property type="term" value="C:cytoplasm"/>
    <property type="evidence" value="ECO:0007669"/>
    <property type="project" value="UniProtKB-SubCell"/>
</dbReference>
<dbReference type="GO" id="GO:0004534">
    <property type="term" value="F:5'-3' RNA exonuclease activity"/>
    <property type="evidence" value="ECO:0007669"/>
    <property type="project" value="UniProtKB-UniRule"/>
</dbReference>
<dbReference type="GO" id="GO:0003723">
    <property type="term" value="F:RNA binding"/>
    <property type="evidence" value="ECO:0007669"/>
    <property type="project" value="UniProtKB-UniRule"/>
</dbReference>
<dbReference type="GO" id="GO:0004521">
    <property type="term" value="F:RNA endonuclease activity"/>
    <property type="evidence" value="ECO:0007669"/>
    <property type="project" value="UniProtKB-UniRule"/>
</dbReference>
<dbReference type="GO" id="GO:0008270">
    <property type="term" value="F:zinc ion binding"/>
    <property type="evidence" value="ECO:0007669"/>
    <property type="project" value="InterPro"/>
</dbReference>
<dbReference type="GO" id="GO:0006364">
    <property type="term" value="P:rRNA processing"/>
    <property type="evidence" value="ECO:0007669"/>
    <property type="project" value="UniProtKB-UniRule"/>
</dbReference>
<dbReference type="CDD" id="cd07714">
    <property type="entry name" value="RNaseJ_MBL-fold"/>
    <property type="match status" value="1"/>
</dbReference>
<dbReference type="FunFam" id="3.10.20.580:FF:000001">
    <property type="entry name" value="Ribonuclease J"/>
    <property type="match status" value="1"/>
</dbReference>
<dbReference type="FunFam" id="3.40.50.10710:FF:000002">
    <property type="entry name" value="Ribonuclease J 2"/>
    <property type="match status" value="1"/>
</dbReference>
<dbReference type="Gene3D" id="3.10.20.580">
    <property type="match status" value="1"/>
</dbReference>
<dbReference type="Gene3D" id="3.40.50.10710">
    <property type="entry name" value="Metallo-hydrolase/oxidoreductase"/>
    <property type="match status" value="1"/>
</dbReference>
<dbReference type="Gene3D" id="3.60.15.10">
    <property type="entry name" value="Ribonuclease Z/Hydroxyacylglutathione hydrolase-like"/>
    <property type="match status" value="1"/>
</dbReference>
<dbReference type="HAMAP" id="MF_01491">
    <property type="entry name" value="RNase_J_bact"/>
    <property type="match status" value="1"/>
</dbReference>
<dbReference type="InterPro" id="IPR001279">
    <property type="entry name" value="Metallo-B-lactamas"/>
</dbReference>
<dbReference type="InterPro" id="IPR036866">
    <property type="entry name" value="RibonucZ/Hydroxyglut_hydro"/>
</dbReference>
<dbReference type="InterPro" id="IPR011108">
    <property type="entry name" value="RMMBL"/>
</dbReference>
<dbReference type="InterPro" id="IPR004613">
    <property type="entry name" value="RNase_J"/>
</dbReference>
<dbReference type="InterPro" id="IPR042173">
    <property type="entry name" value="RNase_J_2"/>
</dbReference>
<dbReference type="InterPro" id="IPR055132">
    <property type="entry name" value="RNase_J_b_CASP"/>
</dbReference>
<dbReference type="InterPro" id="IPR030854">
    <property type="entry name" value="RNase_J_bac"/>
</dbReference>
<dbReference type="InterPro" id="IPR041636">
    <property type="entry name" value="RNase_J_C"/>
</dbReference>
<dbReference type="NCBIfam" id="TIGR00649">
    <property type="entry name" value="MG423"/>
    <property type="match status" value="1"/>
</dbReference>
<dbReference type="PANTHER" id="PTHR43694">
    <property type="entry name" value="RIBONUCLEASE J"/>
    <property type="match status" value="1"/>
</dbReference>
<dbReference type="PANTHER" id="PTHR43694:SF4">
    <property type="entry name" value="RIBONUCLEASE J 2"/>
    <property type="match status" value="1"/>
</dbReference>
<dbReference type="Pfam" id="PF00753">
    <property type="entry name" value="Lactamase_B"/>
    <property type="match status" value="1"/>
</dbReference>
<dbReference type="Pfam" id="PF07521">
    <property type="entry name" value="RMMBL"/>
    <property type="match status" value="1"/>
</dbReference>
<dbReference type="Pfam" id="PF22505">
    <property type="entry name" value="RNase_J_b_CASP"/>
    <property type="match status" value="1"/>
</dbReference>
<dbReference type="Pfam" id="PF17770">
    <property type="entry name" value="RNase_J_C"/>
    <property type="match status" value="1"/>
</dbReference>
<dbReference type="PIRSF" id="PIRSF004803">
    <property type="entry name" value="RnjA"/>
    <property type="match status" value="1"/>
</dbReference>
<dbReference type="SMART" id="SM00849">
    <property type="entry name" value="Lactamase_B"/>
    <property type="match status" value="1"/>
</dbReference>
<dbReference type="SUPFAM" id="SSF56281">
    <property type="entry name" value="Metallo-hydrolase/oxidoreductase"/>
    <property type="match status" value="1"/>
</dbReference>
<protein>
    <recommendedName>
        <fullName evidence="2">Ribonuclease J 2</fullName>
        <shortName evidence="2">RNase J2</shortName>
        <ecNumber evidence="2">3.1.-.-</ecNumber>
    </recommendedName>
</protein>
<reference key="1">
    <citation type="journal article" date="2001" name="Lancet">
        <title>Whole genome sequencing of meticillin-resistant Staphylococcus aureus.</title>
        <authorList>
            <person name="Kuroda M."/>
            <person name="Ohta T."/>
            <person name="Uchiyama I."/>
            <person name="Baba T."/>
            <person name="Yuzawa H."/>
            <person name="Kobayashi I."/>
            <person name="Cui L."/>
            <person name="Oguchi A."/>
            <person name="Aoki K."/>
            <person name="Nagai Y."/>
            <person name="Lian J.-Q."/>
            <person name="Ito T."/>
            <person name="Kanamori M."/>
            <person name="Matsumaru H."/>
            <person name="Maruyama A."/>
            <person name="Murakami H."/>
            <person name="Hosoyama A."/>
            <person name="Mizutani-Ui Y."/>
            <person name="Takahashi N.K."/>
            <person name="Sawano T."/>
            <person name="Inoue R."/>
            <person name="Kaito C."/>
            <person name="Sekimizu K."/>
            <person name="Hirakawa H."/>
            <person name="Kuhara S."/>
            <person name="Goto S."/>
            <person name="Yabuzaki J."/>
            <person name="Kanehisa M."/>
            <person name="Yamashita A."/>
            <person name="Oshima K."/>
            <person name="Furuya K."/>
            <person name="Yoshino C."/>
            <person name="Shiba T."/>
            <person name="Hattori M."/>
            <person name="Ogasawara N."/>
            <person name="Hayashi H."/>
            <person name="Hiramatsu K."/>
        </authorList>
    </citation>
    <scope>NUCLEOTIDE SEQUENCE [LARGE SCALE GENOMIC DNA]</scope>
    <source>
        <strain>N315</strain>
    </source>
</reference>
<reference key="2">
    <citation type="submission" date="2007-10" db="UniProtKB">
        <title>Shotgun proteomic analysis of total and membrane protein extracts of S. aureus strain N315.</title>
        <authorList>
            <person name="Vaezzadeh A.R."/>
            <person name="Deshusses J."/>
            <person name="Lescuyer P."/>
            <person name="Hochstrasser D.F."/>
        </authorList>
    </citation>
    <scope>IDENTIFICATION BY MASS SPECTROMETRY [LARGE SCALE ANALYSIS]</scope>
    <source>
        <strain>N315</strain>
    </source>
</reference>
<organism>
    <name type="scientific">Staphylococcus aureus (strain N315)</name>
    <dbReference type="NCBI Taxonomy" id="158879"/>
    <lineage>
        <taxon>Bacteria</taxon>
        <taxon>Bacillati</taxon>
        <taxon>Bacillota</taxon>
        <taxon>Bacilli</taxon>
        <taxon>Bacillales</taxon>
        <taxon>Staphylococcaceae</taxon>
        <taxon>Staphylococcus</taxon>
    </lineage>
</organism>
<evidence type="ECO:0000250" key="1"/>
<evidence type="ECO:0000255" key="2">
    <source>
        <dbReference type="HAMAP-Rule" id="MF_01491"/>
    </source>
</evidence>
<accession>Q7A5X6</accession>
<name>RNJ2_STAAN</name>
<keyword id="KW-0963">Cytoplasm</keyword>
<keyword id="KW-0255">Endonuclease</keyword>
<keyword id="KW-0269">Exonuclease</keyword>
<keyword id="KW-0378">Hydrolase</keyword>
<keyword id="KW-0479">Metal-binding</keyword>
<keyword id="KW-0540">Nuclease</keyword>
<keyword id="KW-0694">RNA-binding</keyword>
<keyword id="KW-0698">rRNA processing</keyword>
<keyword id="KW-0862">Zinc</keyword>
<proteinExistence type="evidence at protein level"/>
<sequence length="557" mass="62604">MSLIKKKNKDIRIIPLGGVGEIAKNMYIVEVDDEMFMLDAGLMFPEDEMLGIDIVIPDISYVLENKDKLKGIFLTHGHEHAIGAVSYVLEQLDAPVYGSKLTIALIKENMKARNIDKKVRYYTVNNDSIMRFKNVNISFFNTTHSIPDSLGVCIHTSYGAIVYTGEFKFDQSLHGHYAPDIKRMAEIGEEGVFVLISDSTEAEKPGYNTPENVIEHHMYDAFAKVRGRLIVSCYASNFIRIQQVLNIASKLNRKVSFLGRSLESSFNIARKMGYFDIPKDLLIPITEVDNYPKNEVIIIATGMQGEPVEALSQMAQHKHKIMNIEEGDSVFLAITASANMEVIIANTLNELVRAGAHIIPNNKKIHASSHGCMEELKMMINIMKPEYFIPVQGEFKMQIAHAKLAAEAGVAPEKIFLVEKGDVINYNGKDMILNEKVNSGNILIDGIGIGDVGNIVLRDRHLLAEDGIFIAVVTLDPKNRRIAAGPEIQSRGFVYVRESEDLLREAEEKVREIVEAGLQEKRIEWSEIKQNMRDQISKLLFESTKRRPMIIPVISEI</sequence>
<comment type="function">
    <text evidence="1">An RNase that has 5'-3' exonuclease and possibly endoonuclease activity. Involved in maturation of rRNA and in some organisms also mRNA maturation and/or decay (By similarity).</text>
</comment>
<comment type="cofactor">
    <cofactor evidence="2">
        <name>Zn(2+)</name>
        <dbReference type="ChEBI" id="CHEBI:29105"/>
    </cofactor>
    <text evidence="2">Binds up to 2 Zn(2+) ions per subunit. It is not clear if Zn(2+) or Mg(2+) is physiologically important.</text>
</comment>
<comment type="subunit">
    <text evidence="2">Homodimer, may be a subunit of the RNA degradosome.</text>
</comment>
<comment type="subcellular location">
    <subcellularLocation>
        <location evidence="2">Cytoplasm</location>
    </subcellularLocation>
</comment>
<comment type="similarity">
    <text evidence="2">Belongs to the metallo-beta-lactamase superfamily. RNA-metabolizing metallo-beta-lactamase-like family. Bacterial RNase J subfamily.</text>
</comment>
<gene>
    <name evidence="2" type="primary">rnj2</name>
    <name type="ordered locus">SA1118</name>
</gene>